<proteinExistence type="inferred from homology"/>
<feature type="chain" id="PRO_1000086681" description="Large ribosomal subunit protein uL18">
    <location>
        <begin position="1"/>
        <end position="121"/>
    </location>
</feature>
<name>RL18_ROSCS</name>
<sequence>MAQRTPRELRLRRHRRVRKKVSGTPQRPRLCVFRSNMHIYAQVIDDTVGRTLAAASTVEPELRASLAGKTKTERAKVVGAAIAERARAVGIECVVFDRGGFKYHGRIQALADAAREGGLKF</sequence>
<comment type="function">
    <text evidence="1">This is one of the proteins that bind and probably mediate the attachment of the 5S RNA into the large ribosomal subunit, where it forms part of the central protuberance.</text>
</comment>
<comment type="subunit">
    <text evidence="1">Part of the 50S ribosomal subunit; part of the 5S rRNA/L5/L18/L25 subcomplex. Contacts the 5S and 23S rRNAs.</text>
</comment>
<comment type="similarity">
    <text evidence="1">Belongs to the universal ribosomal protein uL18 family.</text>
</comment>
<reference key="1">
    <citation type="submission" date="2007-08" db="EMBL/GenBank/DDBJ databases">
        <title>Complete sequence of Roseiflexus castenholzii DSM 13941.</title>
        <authorList>
            <consortium name="US DOE Joint Genome Institute"/>
            <person name="Copeland A."/>
            <person name="Lucas S."/>
            <person name="Lapidus A."/>
            <person name="Barry K."/>
            <person name="Glavina del Rio T."/>
            <person name="Dalin E."/>
            <person name="Tice H."/>
            <person name="Pitluck S."/>
            <person name="Thompson L.S."/>
            <person name="Brettin T."/>
            <person name="Bruce D."/>
            <person name="Detter J.C."/>
            <person name="Han C."/>
            <person name="Tapia R."/>
            <person name="Schmutz J."/>
            <person name="Larimer F."/>
            <person name="Land M."/>
            <person name="Hauser L."/>
            <person name="Kyrpides N."/>
            <person name="Mikhailova N."/>
            <person name="Bryant D.A."/>
            <person name="Hanada S."/>
            <person name="Tsukatani Y."/>
            <person name="Richardson P."/>
        </authorList>
    </citation>
    <scope>NUCLEOTIDE SEQUENCE [LARGE SCALE GENOMIC DNA]</scope>
    <source>
        <strain>DSM 13941 / HLO8</strain>
    </source>
</reference>
<accession>A7NR47</accession>
<gene>
    <name evidence="1" type="primary">rplR</name>
    <name type="ordered locus">Rcas_4010</name>
</gene>
<keyword id="KW-1185">Reference proteome</keyword>
<keyword id="KW-0687">Ribonucleoprotein</keyword>
<keyword id="KW-0689">Ribosomal protein</keyword>
<keyword id="KW-0694">RNA-binding</keyword>
<keyword id="KW-0699">rRNA-binding</keyword>
<dbReference type="EMBL" id="CP000804">
    <property type="protein sequence ID" value="ABU60043.1"/>
    <property type="molecule type" value="Genomic_DNA"/>
</dbReference>
<dbReference type="RefSeq" id="WP_012122465.1">
    <property type="nucleotide sequence ID" value="NC_009767.1"/>
</dbReference>
<dbReference type="SMR" id="A7NR47"/>
<dbReference type="STRING" id="383372.Rcas_4010"/>
<dbReference type="KEGG" id="rca:Rcas_4010"/>
<dbReference type="eggNOG" id="COG0256">
    <property type="taxonomic scope" value="Bacteria"/>
</dbReference>
<dbReference type="HOGENOM" id="CLU_098841_0_1_0"/>
<dbReference type="OrthoDB" id="9810939at2"/>
<dbReference type="Proteomes" id="UP000000263">
    <property type="component" value="Chromosome"/>
</dbReference>
<dbReference type="GO" id="GO:0022625">
    <property type="term" value="C:cytosolic large ribosomal subunit"/>
    <property type="evidence" value="ECO:0007669"/>
    <property type="project" value="TreeGrafter"/>
</dbReference>
<dbReference type="GO" id="GO:0008097">
    <property type="term" value="F:5S rRNA binding"/>
    <property type="evidence" value="ECO:0007669"/>
    <property type="project" value="TreeGrafter"/>
</dbReference>
<dbReference type="GO" id="GO:0003735">
    <property type="term" value="F:structural constituent of ribosome"/>
    <property type="evidence" value="ECO:0007669"/>
    <property type="project" value="InterPro"/>
</dbReference>
<dbReference type="GO" id="GO:0006412">
    <property type="term" value="P:translation"/>
    <property type="evidence" value="ECO:0007669"/>
    <property type="project" value="UniProtKB-UniRule"/>
</dbReference>
<dbReference type="CDD" id="cd00432">
    <property type="entry name" value="Ribosomal_L18_L5e"/>
    <property type="match status" value="1"/>
</dbReference>
<dbReference type="FunFam" id="3.30.420.100:FF:000001">
    <property type="entry name" value="50S ribosomal protein L18"/>
    <property type="match status" value="1"/>
</dbReference>
<dbReference type="Gene3D" id="3.30.420.100">
    <property type="match status" value="1"/>
</dbReference>
<dbReference type="HAMAP" id="MF_01337_B">
    <property type="entry name" value="Ribosomal_uL18_B"/>
    <property type="match status" value="1"/>
</dbReference>
<dbReference type="InterPro" id="IPR004389">
    <property type="entry name" value="Ribosomal_uL18_bac-type"/>
</dbReference>
<dbReference type="InterPro" id="IPR005484">
    <property type="entry name" value="Ribosomal_uL18_bac/euk"/>
</dbReference>
<dbReference type="NCBIfam" id="TIGR00060">
    <property type="entry name" value="L18_bact"/>
    <property type="match status" value="1"/>
</dbReference>
<dbReference type="PANTHER" id="PTHR12899">
    <property type="entry name" value="39S RIBOSOMAL PROTEIN L18, MITOCHONDRIAL"/>
    <property type="match status" value="1"/>
</dbReference>
<dbReference type="PANTHER" id="PTHR12899:SF3">
    <property type="entry name" value="LARGE RIBOSOMAL SUBUNIT PROTEIN UL18M"/>
    <property type="match status" value="1"/>
</dbReference>
<dbReference type="Pfam" id="PF00861">
    <property type="entry name" value="Ribosomal_L18p"/>
    <property type="match status" value="1"/>
</dbReference>
<dbReference type="SUPFAM" id="SSF53137">
    <property type="entry name" value="Translational machinery components"/>
    <property type="match status" value="1"/>
</dbReference>
<protein>
    <recommendedName>
        <fullName evidence="1">Large ribosomal subunit protein uL18</fullName>
    </recommendedName>
    <alternativeName>
        <fullName evidence="2">50S ribosomal protein L18</fullName>
    </alternativeName>
</protein>
<organism>
    <name type="scientific">Roseiflexus castenholzii (strain DSM 13941 / HLO8)</name>
    <dbReference type="NCBI Taxonomy" id="383372"/>
    <lineage>
        <taxon>Bacteria</taxon>
        <taxon>Bacillati</taxon>
        <taxon>Chloroflexota</taxon>
        <taxon>Chloroflexia</taxon>
        <taxon>Chloroflexales</taxon>
        <taxon>Roseiflexineae</taxon>
        <taxon>Roseiflexaceae</taxon>
        <taxon>Roseiflexus</taxon>
    </lineage>
</organism>
<evidence type="ECO:0000255" key="1">
    <source>
        <dbReference type="HAMAP-Rule" id="MF_01337"/>
    </source>
</evidence>
<evidence type="ECO:0000305" key="2"/>